<sequence length="552" mass="62302">MAEKQKHDGRVKIGHYVLGDTLGVGTFGKVKIGEHQLTGHKVAVKILNRQKIRSLDVVGKIKREIQNLKLFRHPHIIKLYQVISTPTDFFMVMEYVSGGELFDYICKHGRVEEMEARRLFQQILSAVDYCHRHMVVHRDLKPENVLLDAHMNAKIADFGLSNIMSDGEFLRTSCGSPNYAAPEVISGRLYAGPEVDIWSCGVILYALLCGTLPFDDEHVPTLFKKIRGGVFYIPEYLNRSVATLLMHMLQVDPLKRATIKDIREHEWFKQDLPSYLFPEDPSYDANVIDDEAVKEVCEKFECTESEVMNSLYSGDPQDQLAVAYHLIIDNRRIMNQASEFYLASSPPSGSFMDDSAMHIPPGLKPHPERMPPLIADSPKARCPLDALNTTKPKSLAVKKAKWHLGIRSQSKPYDIMAEVYRAMKQLDFEWKVVNAYHLRVRRKNPVTGNYVKMSLQLYLVDNRSYLLDFKSIDDEVVEQRSGSSTPQRSCSAAGLHRPRSSFDSTTAESHSLSGSLTGSLTGSTLSSVSPRLGSHTMDFFEMCASLITTLAR</sequence>
<organism>
    <name type="scientific">Pongo abelii</name>
    <name type="common">Sumatran orangutan</name>
    <name type="synonym">Pongo pygmaeus abelii</name>
    <dbReference type="NCBI Taxonomy" id="9601"/>
    <lineage>
        <taxon>Eukaryota</taxon>
        <taxon>Metazoa</taxon>
        <taxon>Chordata</taxon>
        <taxon>Craniata</taxon>
        <taxon>Vertebrata</taxon>
        <taxon>Euteleostomi</taxon>
        <taxon>Mammalia</taxon>
        <taxon>Eutheria</taxon>
        <taxon>Euarchontoglires</taxon>
        <taxon>Primates</taxon>
        <taxon>Haplorrhini</taxon>
        <taxon>Catarrhini</taxon>
        <taxon>Hominidae</taxon>
        <taxon>Pongo</taxon>
    </lineage>
</organism>
<proteinExistence type="evidence at transcript level"/>
<reference key="1">
    <citation type="submission" date="2004-11" db="EMBL/GenBank/DDBJ databases">
        <authorList>
            <consortium name="The German cDNA consortium"/>
        </authorList>
    </citation>
    <scope>NUCLEOTIDE SEQUENCE [LARGE SCALE MRNA]</scope>
    <source>
        <tissue>Heart</tissue>
    </source>
</reference>
<comment type="function">
    <text evidence="1 2 4">Catalytic subunit of AMP-activated protein kinase (AMPK), an energy sensor protein kinase that plays a key role in regulating cellular energy metabolism. In response to reduction of intracellular ATP levels, AMPK activates energy-producing pathways and inhibits energy-consuming processes: inhibits protein, carbohydrate and lipid biosynthesis, as well as cell growth and proliferation. AMPK acts via direct phosphorylation of metabolic enzymes, and by longer-term effects via phosphorylation of transcription regulators. Regulates lipid synthesis by phosphorylating and inactivating lipid metabolic enzymes such as ACACA, ACACB, GYS1, HMGCR and LIPE; regulates fatty acid and cholesterol synthesis by phosphorylating acetyl-CoA carboxylase (ACACA and ACACB) and hormone-sensitive lipase (LIPE) enzymes, respectively (By similarity). Promotes lipolysis of lipid droplets by mediating phosphorylation of isoform 1 of CHKA (CHKalpha2) (By similarity). Regulates insulin-signaling and glycolysis by phosphorylating IRS1, PFKFB2 and PFKFB3 (By similarity). Involved in insulin receptor/INSR internalization (By similarity). AMPK stimulates glucose uptake in muscle by increasing the translocation of the glucose transporter SLC2A4/GLUT4 to the plasma membrane, possibly by mediating phosphorylation of TBC1D4/AS160 (By similarity). Regulates transcription and chromatin structure by phosphorylating transcription regulators involved in energy metabolism such as CRTC2/TORC2, FOXO3, histone H2B, HDAC5, MEF2C, MLXIPL/ChREBP, EP300, HNF4A, p53/TP53, SREBF1, SREBF2 and PPARGC1A (By similarity). Acts as a key regulator of glucose homeostasis in liver by phosphorylating CRTC2/TORC2, leading to CRTC2/TORC2 sequestration in the cytoplasm. In response to stress, phosphorylates 'Ser-36' of histone H2B (H2BS36ph), leading to promote transcription (By similarity). Acts as a key regulator of cell growth and proliferation by phosphorylating FNIP1, TSC2, RPTOR, WDR24 and ATG1/ULK1: in response to nutrient limitation, negatively regulates the mTORC1 complex by phosphorylating RPTOR component of the mTORC1 complex and by phosphorylating and activating TSC2. Also phosphorylates and inhibits GATOR2 subunit WDR24 in response to nutrient limitation, leading to suppress glucose-mediated mTORC1 activation (By similarity). In response to energetic stress, phosphorylates FNIP1, inactivating the non-canonical mTORC1 signaling, thereby promoting nuclear translocation of TFEB and TFE3, and inducing transcription of lysosomal or autophagy genes (By similarity). In response to nutrient limitation, promotes autophagy by phosphorylating and activating ATG1/ULK1. In that process also activates WDR45/WIPI4. Phosphorylates CASP6, thereby preventing its autoprocessing and subsequent activation (By similarity). AMPK also acts as a regulator of circadian rhythm by mediating phosphorylation of CRY1, leading to destabilize it. May regulate the Wnt signaling pathway by phosphorylating CTNNB1, leading to stabilize it (By similarity). Also acts as a regulator of cellular polarity by remodeling the actin cytoskeleton; probably by indirectly activating myosin. Also phosphorylates CFTR, EEF2K, KLC1, NOS3 and SLC12A1 (By similarity). Plays an important role in the differential regulation of pro-autophagy (composed of PIK3C3, BECN1, PIK3R4 and UVRAG or ATG14) and non-autophagy (composed of PIK3C3, BECN1 and PIK3R4) complexes, in response to glucose starvation. Can inhibit the non-autophagy complex by phosphorylating PIK3C3 and can activate the pro-autophagy complex by phosphorylating BECN1 (By similarity). Upon glucose starvation, promotes ARF6 activation in a kinase-independent manner leading to cell migration (By similarity). Upon glucose deprivation mediates the phosphorylation of ACSS2 at 'Ser-659', which exposes the nuclear localization signal of ACSS2, required for its interaction with KPNA1 and nuclear translocation (By similarity). Upon stress, regulates mitochondrial fragmentation through phosphorylation of MTFR1L (By similarity).</text>
</comment>
<comment type="catalytic activity">
    <reaction evidence="2">
        <text>L-seryl-[protein] + ATP = O-phospho-L-seryl-[protein] + ADP + H(+)</text>
        <dbReference type="Rhea" id="RHEA:17989"/>
        <dbReference type="Rhea" id="RHEA-COMP:9863"/>
        <dbReference type="Rhea" id="RHEA-COMP:11604"/>
        <dbReference type="ChEBI" id="CHEBI:15378"/>
        <dbReference type="ChEBI" id="CHEBI:29999"/>
        <dbReference type="ChEBI" id="CHEBI:30616"/>
        <dbReference type="ChEBI" id="CHEBI:83421"/>
        <dbReference type="ChEBI" id="CHEBI:456216"/>
        <dbReference type="EC" id="2.7.11.1"/>
    </reaction>
</comment>
<comment type="catalytic activity">
    <reaction evidence="2">
        <text>L-threonyl-[protein] + ATP = O-phospho-L-threonyl-[protein] + ADP + H(+)</text>
        <dbReference type="Rhea" id="RHEA:46608"/>
        <dbReference type="Rhea" id="RHEA-COMP:11060"/>
        <dbReference type="Rhea" id="RHEA-COMP:11605"/>
        <dbReference type="ChEBI" id="CHEBI:15378"/>
        <dbReference type="ChEBI" id="CHEBI:30013"/>
        <dbReference type="ChEBI" id="CHEBI:30616"/>
        <dbReference type="ChEBI" id="CHEBI:61977"/>
        <dbReference type="ChEBI" id="CHEBI:456216"/>
        <dbReference type="EC" id="2.7.11.1"/>
    </reaction>
</comment>
<comment type="catalytic activity">
    <reaction evidence="2">
        <text>L-seryl-[acetyl-CoA carboxylase] + ATP = O-phospho-L-seryl-[acetyl-CoA carboxylase] + ADP + H(+)</text>
        <dbReference type="Rhea" id="RHEA:20333"/>
        <dbReference type="Rhea" id="RHEA-COMP:13722"/>
        <dbReference type="Rhea" id="RHEA-COMP:13723"/>
        <dbReference type="ChEBI" id="CHEBI:15378"/>
        <dbReference type="ChEBI" id="CHEBI:29999"/>
        <dbReference type="ChEBI" id="CHEBI:30616"/>
        <dbReference type="ChEBI" id="CHEBI:83421"/>
        <dbReference type="ChEBI" id="CHEBI:456216"/>
    </reaction>
</comment>
<comment type="catalytic activity">
    <reaction evidence="2">
        <text>L-seryl-[3-hydroxy-3-methylglutaryl-coenzyme A reductase] + ATP = O-phospho-L-seryl-[3-hydroxy-3-methylglutaryl-coenzyme A reductase] + ADP + H(+)</text>
        <dbReference type="Rhea" id="RHEA:23172"/>
        <dbReference type="Rhea" id="RHEA-COMP:13692"/>
        <dbReference type="Rhea" id="RHEA-COMP:13693"/>
        <dbReference type="ChEBI" id="CHEBI:15378"/>
        <dbReference type="ChEBI" id="CHEBI:29999"/>
        <dbReference type="ChEBI" id="CHEBI:30616"/>
        <dbReference type="ChEBI" id="CHEBI:83421"/>
        <dbReference type="ChEBI" id="CHEBI:456216"/>
        <dbReference type="EC" id="2.7.11.31"/>
    </reaction>
</comment>
<comment type="cofactor">
    <cofactor evidence="8">
        <name>Mg(2+)</name>
        <dbReference type="ChEBI" id="CHEBI:18420"/>
    </cofactor>
</comment>
<comment type="activity regulation">
    <text evidence="1">Activated by phosphorylation on Thr-172. Binding of AMP to non-catalytic gamma subunit (PRKAG1, PRKAG2 or PRKAG3) results in allosteric activation, inducing phosphorylation on Thr-172. AMP-binding to gamma subunit also sustains activity by preventing dephosphorylation of Thr-172. ADP also stimulates Thr-172 phosphorylation, without stimulating already phosphorylated AMPK. ATP promotes dephosphorylation of Thr-172, rendering the enzyme inactive. Under physiological conditions AMPK mainly exists in its inactive form in complex with ATP, which is much more abundant than AMP. Selectively inhibited by compound C (6-[4-(2-Piperidin-1-yl-ethoxy)-phenyl)]-3-pyridin-4-yl-pyyrazolo[1,5-a] pyrimidine. Activated by resveratrol, a natural polyphenol present in red wine, and S17834, a synthetic polyphenol. Salicylate/aspirin directly activates kinase activity, primarily by inhibiting Thr-172 dephosphorylation (By similarity).</text>
</comment>
<comment type="subunit">
    <text evidence="1 4">AMPK is a heterotrimer of an alpha catalytic subunit (PRKAA1 or PRKAA2), a beta (PRKAB1 or PRKAB2) and a gamma non-catalytic subunits (PRKAG1, PRKAG2 or PRKAG3). Interacts with FNIP1 and FNIP2 (By similarity). Interacts with DUSP29 (By similarity). Interacts with ARF6 (By similarity). The phosphorylated form at Thr-172 mediated by CamKK2 interacts with ACSS2 (By similarity).</text>
</comment>
<comment type="subcellular location">
    <subcellularLocation>
        <location evidence="4">Cytoplasm</location>
    </subcellularLocation>
    <subcellularLocation>
        <location evidence="1">Nucleus</location>
    </subcellularLocation>
    <text evidence="1">In response to stress, recruited by p53/TP53 to specific promoters.</text>
</comment>
<comment type="domain">
    <text evidence="3">The AIS (autoinhibitory sequence) region shows some sequence similarity with the ubiquitin-associated domains and represses kinase activity.</text>
</comment>
<comment type="PTM">
    <text evidence="4">Ubiquitinated.</text>
</comment>
<comment type="PTM">
    <text evidence="1">Phosphorylated at Thr-172 by STK11/LKB1 in complex with STE20-related adapter-alpha (STRADA) pseudo kinase and CAB39. Also phosphorylated at Thr-172 by CAMKK2; triggered by a rise in intracellular calcium ions, without detectable changes in the AMP/ATP ratio. CAMKK1 can also phosphorylate Thr-172, but at much lower level. Dephosphorylated by protein phosphatase 2A and 2C (PP2A and PP2C). Phosphorylated by ULK1; leading to negatively regulate AMPK activity and suggesting the existence of a regulatory feedback loop between ULK1 and AMPK (By similarity). Dephosphorylated by PPM1A and PPM1B at Thr-172 (mediated by STK11/LKB1) (By similarity).</text>
</comment>
<comment type="similarity">
    <text evidence="8">Belongs to the protein kinase superfamily. CAMK Ser/Thr protein kinase family. SNF1 subfamily.</text>
</comment>
<dbReference type="EC" id="2.7.11.1" evidence="2"/>
<dbReference type="EC" id="2.7.11.31" evidence="2"/>
<dbReference type="EMBL" id="CR858118">
    <property type="protein sequence ID" value="CAH90357.1"/>
    <property type="molecule type" value="mRNA"/>
</dbReference>
<dbReference type="RefSeq" id="NP_001125173.1">
    <property type="nucleotide sequence ID" value="NM_001131701.2"/>
</dbReference>
<dbReference type="BMRB" id="Q5RD00"/>
<dbReference type="SMR" id="Q5RD00"/>
<dbReference type="STRING" id="9601.ENSPPYP00000001519"/>
<dbReference type="GeneID" id="100172060"/>
<dbReference type="KEGG" id="pon:100172060"/>
<dbReference type="CTD" id="5563"/>
<dbReference type="eggNOG" id="KOG0583">
    <property type="taxonomic scope" value="Eukaryota"/>
</dbReference>
<dbReference type="InParanoid" id="Q5RD00"/>
<dbReference type="OrthoDB" id="193931at2759"/>
<dbReference type="Proteomes" id="UP000001595">
    <property type="component" value="Unplaced"/>
</dbReference>
<dbReference type="GO" id="GO:0005737">
    <property type="term" value="C:cytoplasm"/>
    <property type="evidence" value="ECO:0000250"/>
    <property type="project" value="UniProtKB"/>
</dbReference>
<dbReference type="GO" id="GO:0005634">
    <property type="term" value="C:nucleus"/>
    <property type="evidence" value="ECO:0007669"/>
    <property type="project" value="UniProtKB-SubCell"/>
</dbReference>
<dbReference type="GO" id="GO:0047322">
    <property type="term" value="F:[hydroxymethylglutaryl-CoA reductase (NADPH)] kinase activity"/>
    <property type="evidence" value="ECO:0007669"/>
    <property type="project" value="UniProtKB-EC"/>
</dbReference>
<dbReference type="GO" id="GO:0004679">
    <property type="term" value="F:AMP-activated protein kinase activity"/>
    <property type="evidence" value="ECO:0000250"/>
    <property type="project" value="UniProtKB"/>
</dbReference>
<dbReference type="GO" id="GO:0005524">
    <property type="term" value="F:ATP binding"/>
    <property type="evidence" value="ECO:0007669"/>
    <property type="project" value="UniProtKB-KW"/>
</dbReference>
<dbReference type="GO" id="GO:0003682">
    <property type="term" value="F:chromatin binding"/>
    <property type="evidence" value="ECO:0000250"/>
    <property type="project" value="UniProtKB"/>
</dbReference>
<dbReference type="GO" id="GO:0140823">
    <property type="term" value="F:histone H2BS36 kinase activity"/>
    <property type="evidence" value="ECO:0000250"/>
    <property type="project" value="UniProtKB"/>
</dbReference>
<dbReference type="GO" id="GO:0046872">
    <property type="term" value="F:metal ion binding"/>
    <property type="evidence" value="ECO:0007669"/>
    <property type="project" value="UniProtKB-KW"/>
</dbReference>
<dbReference type="GO" id="GO:0106310">
    <property type="term" value="F:protein serine kinase activity"/>
    <property type="evidence" value="ECO:0007669"/>
    <property type="project" value="RHEA"/>
</dbReference>
<dbReference type="GO" id="GO:0004674">
    <property type="term" value="F:protein serine/threonine kinase activity"/>
    <property type="evidence" value="ECO:0000250"/>
    <property type="project" value="UniProtKB"/>
</dbReference>
<dbReference type="GO" id="GO:0006914">
    <property type="term" value="P:autophagy"/>
    <property type="evidence" value="ECO:0007669"/>
    <property type="project" value="UniProtKB-KW"/>
</dbReference>
<dbReference type="GO" id="GO:0042149">
    <property type="term" value="P:cellular response to glucose starvation"/>
    <property type="evidence" value="ECO:0000250"/>
    <property type="project" value="UniProtKB"/>
</dbReference>
<dbReference type="GO" id="GO:0031669">
    <property type="term" value="P:cellular response to nutrient levels"/>
    <property type="evidence" value="ECO:0000250"/>
    <property type="project" value="UniProtKB"/>
</dbReference>
<dbReference type="GO" id="GO:0006695">
    <property type="term" value="P:cholesterol biosynthetic process"/>
    <property type="evidence" value="ECO:0007669"/>
    <property type="project" value="UniProtKB-KW"/>
</dbReference>
<dbReference type="GO" id="GO:0097009">
    <property type="term" value="P:energy homeostasis"/>
    <property type="evidence" value="ECO:0000250"/>
    <property type="project" value="UniProtKB"/>
</dbReference>
<dbReference type="GO" id="GO:0006633">
    <property type="term" value="P:fatty acid biosynthetic process"/>
    <property type="evidence" value="ECO:0007669"/>
    <property type="project" value="UniProtKB-KW"/>
</dbReference>
<dbReference type="GO" id="GO:0055089">
    <property type="term" value="P:fatty acid homeostasis"/>
    <property type="evidence" value="ECO:0000250"/>
    <property type="project" value="UniProtKB"/>
</dbReference>
<dbReference type="GO" id="GO:0042593">
    <property type="term" value="P:glucose homeostasis"/>
    <property type="evidence" value="ECO:0000250"/>
    <property type="project" value="UniProtKB"/>
</dbReference>
<dbReference type="GO" id="GO:0035556">
    <property type="term" value="P:intracellular signal transduction"/>
    <property type="evidence" value="ECO:0007669"/>
    <property type="project" value="TreeGrafter"/>
</dbReference>
<dbReference type="GO" id="GO:0008610">
    <property type="term" value="P:lipid biosynthetic process"/>
    <property type="evidence" value="ECO:0000250"/>
    <property type="project" value="UniProtKB"/>
</dbReference>
<dbReference type="GO" id="GO:1905691">
    <property type="term" value="P:lipid droplet disassembly"/>
    <property type="evidence" value="ECO:0000250"/>
    <property type="project" value="UniProtKB"/>
</dbReference>
<dbReference type="GO" id="GO:0043066">
    <property type="term" value="P:negative regulation of apoptotic process"/>
    <property type="evidence" value="ECO:0000250"/>
    <property type="project" value="UniProtKB"/>
</dbReference>
<dbReference type="GO" id="GO:0032007">
    <property type="term" value="P:negative regulation of TOR signaling"/>
    <property type="evidence" value="ECO:0000250"/>
    <property type="project" value="UniProtKB"/>
</dbReference>
<dbReference type="GO" id="GO:1904262">
    <property type="term" value="P:negative regulation of TORC1 signaling"/>
    <property type="evidence" value="ECO:0000250"/>
    <property type="project" value="UniProtKB"/>
</dbReference>
<dbReference type="GO" id="GO:0010508">
    <property type="term" value="P:positive regulation of autophagy"/>
    <property type="evidence" value="ECO:0000250"/>
    <property type="project" value="UniProtKB"/>
</dbReference>
<dbReference type="GO" id="GO:0045821">
    <property type="term" value="P:positive regulation of glycolytic process"/>
    <property type="evidence" value="ECO:0000250"/>
    <property type="project" value="UniProtKB"/>
</dbReference>
<dbReference type="GO" id="GO:1990044">
    <property type="term" value="P:protein localization to lipid droplet"/>
    <property type="evidence" value="ECO:0000250"/>
    <property type="project" value="UniProtKB"/>
</dbReference>
<dbReference type="GO" id="GO:0006468">
    <property type="term" value="P:protein phosphorylation"/>
    <property type="evidence" value="ECO:0000250"/>
    <property type="project" value="UniProtKB"/>
</dbReference>
<dbReference type="GO" id="GO:0042752">
    <property type="term" value="P:regulation of circadian rhythm"/>
    <property type="evidence" value="ECO:0000250"/>
    <property type="project" value="UniProtKB"/>
</dbReference>
<dbReference type="GO" id="GO:0016241">
    <property type="term" value="P:regulation of macroautophagy"/>
    <property type="evidence" value="ECO:0000250"/>
    <property type="project" value="UniProtKB"/>
</dbReference>
<dbReference type="GO" id="GO:0048511">
    <property type="term" value="P:rhythmic process"/>
    <property type="evidence" value="ECO:0007669"/>
    <property type="project" value="UniProtKB-KW"/>
</dbReference>
<dbReference type="GO" id="GO:0016055">
    <property type="term" value="P:Wnt signaling pathway"/>
    <property type="evidence" value="ECO:0007669"/>
    <property type="project" value="UniProtKB-KW"/>
</dbReference>
<dbReference type="CDD" id="cd12200">
    <property type="entry name" value="AMPKA2_C"/>
    <property type="match status" value="1"/>
</dbReference>
<dbReference type="CDD" id="cd14079">
    <property type="entry name" value="STKc_AMPK_alpha"/>
    <property type="match status" value="1"/>
</dbReference>
<dbReference type="CDD" id="cd14404">
    <property type="entry name" value="UBA_AID_AAPK2"/>
    <property type="match status" value="1"/>
</dbReference>
<dbReference type="FunFam" id="1.10.510.10:FF:000079">
    <property type="entry name" value="Non-specific serine/threonine protein kinase"/>
    <property type="match status" value="1"/>
</dbReference>
<dbReference type="FunFam" id="1.10.8.10:FF:000014">
    <property type="entry name" value="Non-specific serine/threonine protein kinase"/>
    <property type="match status" value="1"/>
</dbReference>
<dbReference type="FunFam" id="3.30.200.20:FF:000136">
    <property type="entry name" value="Non-specific serine/threonine protein kinase"/>
    <property type="match status" value="1"/>
</dbReference>
<dbReference type="FunFam" id="3.30.310.80:FF:000003">
    <property type="entry name" value="Non-specific serine/threonine protein kinase"/>
    <property type="match status" value="1"/>
</dbReference>
<dbReference type="Gene3D" id="1.10.8.10">
    <property type="entry name" value="DNA helicase RuvA subunit, C-terminal domain"/>
    <property type="match status" value="1"/>
</dbReference>
<dbReference type="Gene3D" id="3.30.310.80">
    <property type="entry name" value="Kinase associated domain 1, KA1"/>
    <property type="match status" value="1"/>
</dbReference>
<dbReference type="Gene3D" id="3.30.200.20">
    <property type="entry name" value="Phosphorylase Kinase, domain 1"/>
    <property type="match status" value="1"/>
</dbReference>
<dbReference type="Gene3D" id="1.10.510.10">
    <property type="entry name" value="Transferase(Phosphotransferase) domain 1"/>
    <property type="match status" value="1"/>
</dbReference>
<dbReference type="InterPro" id="IPR032270">
    <property type="entry name" value="AMPK_C"/>
</dbReference>
<dbReference type="InterPro" id="IPR039148">
    <property type="entry name" value="AMPKA2_C"/>
</dbReference>
<dbReference type="InterPro" id="IPR028375">
    <property type="entry name" value="KA1/Ssp2_C"/>
</dbReference>
<dbReference type="InterPro" id="IPR011009">
    <property type="entry name" value="Kinase-like_dom_sf"/>
</dbReference>
<dbReference type="InterPro" id="IPR049020">
    <property type="entry name" value="PRKAA1/2_AID"/>
</dbReference>
<dbReference type="InterPro" id="IPR028783">
    <property type="entry name" value="PRKAA2"/>
</dbReference>
<dbReference type="InterPro" id="IPR000719">
    <property type="entry name" value="Prot_kinase_dom"/>
</dbReference>
<dbReference type="InterPro" id="IPR017441">
    <property type="entry name" value="Protein_kinase_ATP_BS"/>
</dbReference>
<dbReference type="InterPro" id="IPR008271">
    <property type="entry name" value="Ser/Thr_kinase_AS"/>
</dbReference>
<dbReference type="PANTHER" id="PTHR24346:SF104">
    <property type="entry name" value="5'-AMP-ACTIVATED PROTEIN KINASE CATALYTIC SUBUNIT ALPHA-2"/>
    <property type="match status" value="1"/>
</dbReference>
<dbReference type="PANTHER" id="PTHR24346">
    <property type="entry name" value="MAP/MICROTUBULE AFFINITY-REGULATING KINASE"/>
    <property type="match status" value="1"/>
</dbReference>
<dbReference type="Pfam" id="PF16579">
    <property type="entry name" value="AdenylateSensor"/>
    <property type="match status" value="1"/>
</dbReference>
<dbReference type="Pfam" id="PF21147">
    <property type="entry name" value="AMPK_alpha_AID"/>
    <property type="match status" value="1"/>
</dbReference>
<dbReference type="Pfam" id="PF00069">
    <property type="entry name" value="Pkinase"/>
    <property type="match status" value="1"/>
</dbReference>
<dbReference type="SMART" id="SM00220">
    <property type="entry name" value="S_TKc"/>
    <property type="match status" value="1"/>
</dbReference>
<dbReference type="SUPFAM" id="SSF103243">
    <property type="entry name" value="KA1-like"/>
    <property type="match status" value="1"/>
</dbReference>
<dbReference type="SUPFAM" id="SSF56112">
    <property type="entry name" value="Protein kinase-like (PK-like)"/>
    <property type="match status" value="1"/>
</dbReference>
<dbReference type="PROSITE" id="PS00107">
    <property type="entry name" value="PROTEIN_KINASE_ATP"/>
    <property type="match status" value="1"/>
</dbReference>
<dbReference type="PROSITE" id="PS50011">
    <property type="entry name" value="PROTEIN_KINASE_DOM"/>
    <property type="match status" value="1"/>
</dbReference>
<dbReference type="PROSITE" id="PS00108">
    <property type="entry name" value="PROTEIN_KINASE_ST"/>
    <property type="match status" value="1"/>
</dbReference>
<name>AAPK2_PONAB</name>
<protein>
    <recommendedName>
        <fullName>5'-AMP-activated protein kinase catalytic subunit alpha-2</fullName>
        <shortName>AMPK subunit alpha-2</shortName>
        <ecNumber evidence="2">2.7.11.1</ecNumber>
    </recommendedName>
    <alternativeName>
        <fullName>Acetyl-CoA carboxylase kinase</fullName>
        <shortName>ACACA kinase</shortName>
    </alternativeName>
    <alternativeName>
        <fullName>Hydroxymethylglutaryl-CoA reductase kinase</fullName>
        <shortName>HMGCR kinase</shortName>
        <ecNumber evidence="2">2.7.11.31</ecNumber>
    </alternativeName>
</protein>
<gene>
    <name type="primary">PRKAA2</name>
</gene>
<evidence type="ECO:0000250" key="1">
    <source>
        <dbReference type="UniProtKB" id="P54646"/>
    </source>
</evidence>
<evidence type="ECO:0000250" key="2">
    <source>
        <dbReference type="UniProtKB" id="Q09137"/>
    </source>
</evidence>
<evidence type="ECO:0000250" key="3">
    <source>
        <dbReference type="UniProtKB" id="Q13131"/>
    </source>
</evidence>
<evidence type="ECO:0000250" key="4">
    <source>
        <dbReference type="UniProtKB" id="Q8BRK8"/>
    </source>
</evidence>
<evidence type="ECO:0000255" key="5">
    <source>
        <dbReference type="PROSITE-ProRule" id="PRU00159"/>
    </source>
</evidence>
<evidence type="ECO:0000255" key="6">
    <source>
        <dbReference type="PROSITE-ProRule" id="PRU10027"/>
    </source>
</evidence>
<evidence type="ECO:0000256" key="7">
    <source>
        <dbReference type="SAM" id="MobiDB-lite"/>
    </source>
</evidence>
<evidence type="ECO:0000305" key="8"/>
<feature type="chain" id="PRO_0000085596" description="5'-AMP-activated protein kinase catalytic subunit alpha-2">
    <location>
        <begin position="1"/>
        <end position="552"/>
    </location>
</feature>
<feature type="domain" description="Protein kinase" evidence="5">
    <location>
        <begin position="16"/>
        <end position="268"/>
    </location>
</feature>
<feature type="region of interest" description="AIS" evidence="3">
    <location>
        <begin position="291"/>
        <end position="376"/>
    </location>
</feature>
<feature type="region of interest" description="Disordered" evidence="7">
    <location>
        <begin position="477"/>
        <end position="521"/>
    </location>
</feature>
<feature type="compositionally biased region" description="Polar residues" evidence="7">
    <location>
        <begin position="480"/>
        <end position="490"/>
    </location>
</feature>
<feature type="compositionally biased region" description="Polar residues" evidence="7">
    <location>
        <begin position="501"/>
        <end position="510"/>
    </location>
</feature>
<feature type="compositionally biased region" description="Low complexity" evidence="7">
    <location>
        <begin position="511"/>
        <end position="521"/>
    </location>
</feature>
<feature type="active site" description="Proton acceptor" evidence="5 6">
    <location>
        <position position="139"/>
    </location>
</feature>
<feature type="binding site" evidence="5">
    <location>
        <begin position="22"/>
        <end position="30"/>
    </location>
    <ligand>
        <name>ATP</name>
        <dbReference type="ChEBI" id="CHEBI:30616"/>
    </ligand>
</feature>
<feature type="binding site" evidence="5">
    <location>
        <position position="45"/>
    </location>
    <ligand>
        <name>ATP</name>
        <dbReference type="ChEBI" id="CHEBI:30616"/>
    </ligand>
</feature>
<feature type="modified residue" description="Phosphothreonine; by LKB1 and CaMKK2" evidence="1">
    <location>
        <position position="172"/>
    </location>
</feature>
<feature type="modified residue" description="Phosphothreonine" evidence="2">
    <location>
        <position position="258"/>
    </location>
</feature>
<feature type="modified residue" description="Phosphoserine" evidence="1">
    <location>
        <position position="377"/>
    </location>
</feature>
<feature type="modified residue" description="Phosphoserine" evidence="2">
    <location>
        <position position="491"/>
    </location>
</feature>
<accession>Q5RD00</accession>
<keyword id="KW-0067">ATP-binding</keyword>
<keyword id="KW-0072">Autophagy</keyword>
<keyword id="KW-0090">Biological rhythms</keyword>
<keyword id="KW-0152">Cholesterol biosynthesis</keyword>
<keyword id="KW-0153">Cholesterol metabolism</keyword>
<keyword id="KW-0156">Chromatin regulator</keyword>
<keyword id="KW-0963">Cytoplasm</keyword>
<keyword id="KW-0275">Fatty acid biosynthesis</keyword>
<keyword id="KW-0276">Fatty acid metabolism</keyword>
<keyword id="KW-0418">Kinase</keyword>
<keyword id="KW-0444">Lipid biosynthesis</keyword>
<keyword id="KW-0443">Lipid metabolism</keyword>
<keyword id="KW-0460">Magnesium</keyword>
<keyword id="KW-0479">Metal-binding</keyword>
<keyword id="KW-0547">Nucleotide-binding</keyword>
<keyword id="KW-0539">Nucleus</keyword>
<keyword id="KW-0597">Phosphoprotein</keyword>
<keyword id="KW-1185">Reference proteome</keyword>
<keyword id="KW-0723">Serine/threonine-protein kinase</keyword>
<keyword id="KW-0752">Steroid biosynthesis</keyword>
<keyword id="KW-0753">Steroid metabolism</keyword>
<keyword id="KW-0756">Sterol biosynthesis</keyword>
<keyword id="KW-1207">Sterol metabolism</keyword>
<keyword id="KW-0804">Transcription</keyword>
<keyword id="KW-0805">Transcription regulation</keyword>
<keyword id="KW-0808">Transferase</keyword>
<keyword id="KW-0832">Ubl conjugation</keyword>
<keyword id="KW-0879">Wnt signaling pathway</keyword>